<name>IPUA_ASPNG</name>
<gene>
    <name type="primary">ipuA</name>
</gene>
<protein>
    <recommendedName>
        <fullName>Isopullulanase</fullName>
        <ecNumber>3.2.1.57</ecNumber>
    </recommendedName>
</protein>
<organism>
    <name type="scientific">Aspergillus niger</name>
    <dbReference type="NCBI Taxonomy" id="5061"/>
    <lineage>
        <taxon>Eukaryota</taxon>
        <taxon>Fungi</taxon>
        <taxon>Dikarya</taxon>
        <taxon>Ascomycota</taxon>
        <taxon>Pezizomycotina</taxon>
        <taxon>Eurotiomycetes</taxon>
        <taxon>Eurotiomycetidae</taxon>
        <taxon>Eurotiales</taxon>
        <taxon>Aspergillaceae</taxon>
        <taxon>Aspergillus</taxon>
        <taxon>Aspergillus subgen. Circumdati</taxon>
    </lineage>
</organism>
<keyword id="KW-0002">3D-structure</keyword>
<keyword id="KW-0903">Direct protein sequencing</keyword>
<keyword id="KW-0325">Glycoprotein</keyword>
<keyword id="KW-0326">Glycosidase</keyword>
<keyword id="KW-0378">Hydrolase</keyword>
<keyword id="KW-0964">Secreted</keyword>
<keyword id="KW-0732">Signal</keyword>
<proteinExistence type="evidence at protein level"/>
<dbReference type="EC" id="3.2.1.57"/>
<dbReference type="EMBL" id="AB001940">
    <property type="protein sequence ID" value="BAA19473.1"/>
    <property type="molecule type" value="Genomic_DNA"/>
</dbReference>
<dbReference type="EMBL" id="D85240">
    <property type="protein sequence ID" value="BAA18971.1"/>
    <property type="molecule type" value="Genomic_DNA"/>
</dbReference>
<dbReference type="PDB" id="1WMR">
    <property type="method" value="X-ray"/>
    <property type="resolution" value="2.40 A"/>
    <property type="chains" value="A/B=20-564"/>
</dbReference>
<dbReference type="PDB" id="1X0C">
    <property type="method" value="X-ray"/>
    <property type="resolution" value="1.70 A"/>
    <property type="chains" value="A/B=20-564"/>
</dbReference>
<dbReference type="PDB" id="2Z8G">
    <property type="method" value="X-ray"/>
    <property type="resolution" value="1.70 A"/>
    <property type="chains" value="A/B=20-564"/>
</dbReference>
<dbReference type="PDB" id="3WWG">
    <property type="method" value="X-ray"/>
    <property type="resolution" value="2.20 A"/>
    <property type="chains" value="A/B/C/D=20-564"/>
</dbReference>
<dbReference type="PDBsum" id="1WMR"/>
<dbReference type="PDBsum" id="1X0C"/>
<dbReference type="PDBsum" id="2Z8G"/>
<dbReference type="PDBsum" id="3WWG"/>
<dbReference type="SMR" id="O00105"/>
<dbReference type="CAZy" id="GH49">
    <property type="family name" value="Glycoside Hydrolase Family 49"/>
</dbReference>
<dbReference type="GlyCosmos" id="O00105">
    <property type="glycosylation" value="15 sites, No reported glycans"/>
</dbReference>
<dbReference type="BRENDA" id="3.2.1.57">
    <property type="organism ID" value="518"/>
</dbReference>
<dbReference type="EvolutionaryTrace" id="O00105"/>
<dbReference type="GO" id="GO:0005576">
    <property type="term" value="C:extracellular region"/>
    <property type="evidence" value="ECO:0007669"/>
    <property type="project" value="UniProtKB-SubCell"/>
</dbReference>
<dbReference type="GO" id="GO:0051675">
    <property type="term" value="F:isopullulanase activity"/>
    <property type="evidence" value="ECO:0007669"/>
    <property type="project" value="UniProtKB-EC"/>
</dbReference>
<dbReference type="Gene3D" id="2.60.350.10">
    <property type="entry name" value="Dextranase, N-terminal"/>
    <property type="match status" value="1"/>
</dbReference>
<dbReference type="Gene3D" id="2.160.20.10">
    <property type="entry name" value="Single-stranded right-handed beta-helix, Pectin lyase-like"/>
    <property type="match status" value="1"/>
</dbReference>
<dbReference type="InterPro" id="IPR041402">
    <property type="entry name" value="B_solenoid_dext"/>
</dbReference>
<dbReference type="InterPro" id="IPR035953">
    <property type="entry name" value="Dextranase_N-ter"/>
</dbReference>
<dbReference type="InterPro" id="IPR005192">
    <property type="entry name" value="Glyco_hydro_49_C"/>
</dbReference>
<dbReference type="InterPro" id="IPR023226">
    <property type="entry name" value="Glyco_hydro_49_N_dom"/>
</dbReference>
<dbReference type="InterPro" id="IPR041274">
    <property type="entry name" value="IPU_b_solenoid"/>
</dbReference>
<dbReference type="InterPro" id="IPR012334">
    <property type="entry name" value="Pectin_lyas_fold"/>
</dbReference>
<dbReference type="InterPro" id="IPR011050">
    <property type="entry name" value="Pectin_lyase_fold/virulence"/>
</dbReference>
<dbReference type="Pfam" id="PF18841">
    <property type="entry name" value="B_solenoid_dext"/>
    <property type="match status" value="1"/>
</dbReference>
<dbReference type="Pfam" id="PF03718">
    <property type="entry name" value="Glyco_hydro_49"/>
    <property type="match status" value="1"/>
</dbReference>
<dbReference type="Pfam" id="PF17433">
    <property type="entry name" value="Glyco_hydro_49N"/>
    <property type="match status" value="1"/>
</dbReference>
<dbReference type="Pfam" id="PF18783">
    <property type="entry name" value="IPU_b_solenoid"/>
    <property type="match status" value="1"/>
</dbReference>
<dbReference type="SUPFAM" id="SSF101596">
    <property type="entry name" value="Dextranase, N-terminal domain"/>
    <property type="match status" value="1"/>
</dbReference>
<dbReference type="SUPFAM" id="SSF51126">
    <property type="entry name" value="Pectin lyase-like"/>
    <property type="match status" value="1"/>
</dbReference>
<reference key="1">
    <citation type="journal article" date="1997" name="Biochem. J.">
        <title>Molecular cloning and heterologous expression of the isopullulanase gene from Aspergillus niger ATCC 9642.</title>
        <authorList>
            <person name="Aoki H."/>
            <person name="Yopi X."/>
            <person name="Sakano Y."/>
        </authorList>
    </citation>
    <scope>NUCLEOTIDE SEQUENCE [GENOMIC DNA]</scope>
    <source>
        <strain>ATCC 9642 / CBS 246.65 / DSM 63263 / NBRC 6342 / NRRL 3536</strain>
    </source>
</reference>
<reference key="2">
    <citation type="journal article" date="1996" name="Biosci. Biotechnol. Biochem.">
        <title>Two components of cell-bound isopullulanase from Aspergillus niger ATCC 9642 -- their purification and enzymatic properties.</title>
        <authorList>
            <person name="Aoki H."/>
            <person name="Yopi X."/>
            <person name="Padmajanti A."/>
            <person name="Sakano Y."/>
        </authorList>
    </citation>
    <scope>PROTEIN SEQUENCE OF 20-29</scope>
    <scope>CHARACTERIZATION</scope>
    <source>
        <strain>ATCC 9642 / CBS 246.65 / DSM 63263 / NBRC 6342 / NRRL 3536</strain>
    </source>
</reference>
<feature type="signal peptide" evidence="2">
    <location>
        <begin position="1"/>
        <end position="19"/>
    </location>
</feature>
<feature type="chain" id="PRO_0000021520" description="Isopullulanase">
    <location>
        <begin position="20"/>
        <end position="564"/>
    </location>
</feature>
<feature type="glycosylation site" description="N-linked (GlcNAc...) asparagine">
    <location>
        <position position="24"/>
    </location>
</feature>
<feature type="glycosylation site" description="N-linked (GlcNAc...) asparagine">
    <location>
        <position position="94"/>
    </location>
</feature>
<feature type="glycosylation site" description="N-linked (GlcNAc...) asparagine">
    <location>
        <position position="115"/>
    </location>
</feature>
<feature type="glycosylation site" description="N-linked (GlcNAc...) asparagine">
    <location>
        <position position="138"/>
    </location>
</feature>
<feature type="glycosylation site" description="N-linked (GlcNAc...) asparagine" evidence="1">
    <location>
        <position position="186"/>
    </location>
</feature>
<feature type="glycosylation site" description="N-linked (GlcNAc...) asparagine">
    <location>
        <position position="210"/>
    </location>
</feature>
<feature type="glycosylation site" description="N-linked (GlcNAc...) asparagine">
    <location>
        <position position="305"/>
    </location>
</feature>
<feature type="glycosylation site" description="N-linked (GlcNAc...) asparagine">
    <location>
        <position position="381"/>
    </location>
</feature>
<feature type="glycosylation site" description="N-linked (GlcNAc...) asparagine">
    <location>
        <position position="448"/>
    </location>
</feature>
<feature type="glycosylation site" description="N-linked (GlcNAc...) asparagine">
    <location>
        <position position="455"/>
    </location>
</feature>
<feature type="glycosylation site" description="N-linked (GlcNAc...) asparagine">
    <location>
        <position position="460"/>
    </location>
</feature>
<feature type="glycosylation site" description="N-linked (GlcNAc...) asparagine" evidence="1">
    <location>
        <position position="486"/>
    </location>
</feature>
<feature type="glycosylation site" description="N-linked (GlcNAc...) asparagine">
    <location>
        <position position="491"/>
    </location>
</feature>
<feature type="glycosylation site" description="N-linked (GlcNAc...) asparagine">
    <location>
        <position position="503"/>
    </location>
</feature>
<feature type="glycosylation site" description="N-linked (GlcNAc...) asparagine">
    <location>
        <position position="535"/>
    </location>
</feature>
<feature type="strand" evidence="3">
    <location>
        <begin position="24"/>
        <end position="29"/>
    </location>
</feature>
<feature type="strand" evidence="3">
    <location>
        <begin position="36"/>
        <end position="38"/>
    </location>
</feature>
<feature type="strand" evidence="3">
    <location>
        <begin position="40"/>
        <end position="42"/>
    </location>
</feature>
<feature type="strand" evidence="3">
    <location>
        <begin position="49"/>
        <end position="51"/>
    </location>
</feature>
<feature type="strand" evidence="3">
    <location>
        <begin position="56"/>
        <end position="63"/>
    </location>
</feature>
<feature type="strand" evidence="3">
    <location>
        <begin position="70"/>
        <end position="72"/>
    </location>
</feature>
<feature type="strand" evidence="3">
    <location>
        <begin position="75"/>
        <end position="77"/>
    </location>
</feature>
<feature type="helix" evidence="3">
    <location>
        <begin position="79"/>
        <end position="82"/>
    </location>
</feature>
<feature type="helix" evidence="3">
    <location>
        <begin position="84"/>
        <end position="89"/>
    </location>
</feature>
<feature type="strand" evidence="3">
    <location>
        <begin position="96"/>
        <end position="106"/>
    </location>
</feature>
<feature type="strand" evidence="3">
    <location>
        <begin position="108"/>
        <end position="113"/>
    </location>
</feature>
<feature type="strand" evidence="3">
    <location>
        <begin position="123"/>
        <end position="127"/>
    </location>
</feature>
<feature type="helix" evidence="3">
    <location>
        <begin position="128"/>
        <end position="130"/>
    </location>
</feature>
<feature type="strand" evidence="3">
    <location>
        <begin position="134"/>
        <end position="137"/>
    </location>
</feature>
<feature type="strand" evidence="3">
    <location>
        <begin position="140"/>
        <end position="145"/>
    </location>
</feature>
<feature type="strand" evidence="3">
    <location>
        <begin position="152"/>
        <end position="158"/>
    </location>
</feature>
<feature type="helix" evidence="3">
    <location>
        <begin position="159"/>
        <end position="161"/>
    </location>
</feature>
<feature type="strand" evidence="3">
    <location>
        <begin position="162"/>
        <end position="165"/>
    </location>
</feature>
<feature type="turn" evidence="3">
    <location>
        <begin position="166"/>
        <end position="169"/>
    </location>
</feature>
<feature type="strand" evidence="3">
    <location>
        <begin position="170"/>
        <end position="182"/>
    </location>
</feature>
<feature type="turn" evidence="3">
    <location>
        <begin position="187"/>
        <end position="189"/>
    </location>
</feature>
<feature type="strand" evidence="3">
    <location>
        <begin position="196"/>
        <end position="199"/>
    </location>
</feature>
<feature type="strand" evidence="3">
    <location>
        <begin position="203"/>
        <end position="205"/>
    </location>
</feature>
<feature type="turn" evidence="3">
    <location>
        <begin position="209"/>
        <end position="211"/>
    </location>
</feature>
<feature type="strand" evidence="3">
    <location>
        <begin position="215"/>
        <end position="219"/>
    </location>
</feature>
<feature type="strand" evidence="3">
    <location>
        <begin position="221"/>
        <end position="225"/>
    </location>
</feature>
<feature type="strand" evidence="3">
    <location>
        <begin position="232"/>
        <end position="234"/>
    </location>
</feature>
<feature type="strand" evidence="3">
    <location>
        <begin position="240"/>
        <end position="243"/>
    </location>
</feature>
<feature type="strand" evidence="3">
    <location>
        <begin position="247"/>
        <end position="251"/>
    </location>
</feature>
<feature type="strand" evidence="3">
    <location>
        <begin position="253"/>
        <end position="255"/>
    </location>
</feature>
<feature type="strand" evidence="3">
    <location>
        <begin position="259"/>
        <end position="267"/>
    </location>
</feature>
<feature type="strand" evidence="3">
    <location>
        <begin position="269"/>
        <end position="271"/>
    </location>
</feature>
<feature type="helix" evidence="3">
    <location>
        <begin position="281"/>
        <end position="283"/>
    </location>
</feature>
<feature type="helix" evidence="3">
    <location>
        <begin position="289"/>
        <end position="291"/>
    </location>
</feature>
<feature type="strand" evidence="3">
    <location>
        <begin position="298"/>
        <end position="302"/>
    </location>
</feature>
<feature type="strand" evidence="3">
    <location>
        <begin position="308"/>
        <end position="314"/>
    </location>
</feature>
<feature type="strand" evidence="3">
    <location>
        <begin position="316"/>
        <end position="318"/>
    </location>
</feature>
<feature type="strand" evidence="3">
    <location>
        <begin position="324"/>
        <end position="328"/>
    </location>
</feature>
<feature type="helix" evidence="3">
    <location>
        <begin position="332"/>
        <end position="334"/>
    </location>
</feature>
<feature type="strand" evidence="3">
    <location>
        <begin position="335"/>
        <end position="345"/>
    </location>
</feature>
<feature type="strand" evidence="4">
    <location>
        <begin position="349"/>
        <end position="351"/>
    </location>
</feature>
<feature type="strand" evidence="3">
    <location>
        <begin position="362"/>
        <end position="372"/>
    </location>
</feature>
<feature type="strand" evidence="3">
    <location>
        <begin position="379"/>
        <end position="391"/>
    </location>
</feature>
<feature type="strand" evidence="3">
    <location>
        <begin position="393"/>
        <end position="395"/>
    </location>
</feature>
<feature type="strand" evidence="3">
    <location>
        <begin position="397"/>
        <end position="399"/>
    </location>
</feature>
<feature type="strand" evidence="3">
    <location>
        <begin position="407"/>
        <end position="419"/>
    </location>
</feature>
<feature type="helix" evidence="3">
    <location>
        <begin position="425"/>
        <end position="427"/>
    </location>
</feature>
<feature type="strand" evidence="3">
    <location>
        <begin position="431"/>
        <end position="434"/>
    </location>
</feature>
<feature type="turn" evidence="3">
    <location>
        <begin position="438"/>
        <end position="440"/>
    </location>
</feature>
<feature type="strand" evidence="3">
    <location>
        <begin position="452"/>
        <end position="472"/>
    </location>
</feature>
<feature type="strand" evidence="3">
    <location>
        <begin position="475"/>
        <end position="478"/>
    </location>
</feature>
<feature type="strand" evidence="3">
    <location>
        <begin position="481"/>
        <end position="497"/>
    </location>
</feature>
<feature type="helix" evidence="3">
    <location>
        <begin position="500"/>
        <end position="502"/>
    </location>
</feature>
<feature type="strand" evidence="3">
    <location>
        <begin position="507"/>
        <end position="509"/>
    </location>
</feature>
<feature type="turn" evidence="3">
    <location>
        <begin position="515"/>
        <end position="517"/>
    </location>
</feature>
<feature type="strand" evidence="3">
    <location>
        <begin position="523"/>
        <end position="533"/>
    </location>
</feature>
<feature type="turn" evidence="3">
    <location>
        <begin position="540"/>
        <end position="547"/>
    </location>
</feature>
<feature type="strand" evidence="3">
    <location>
        <begin position="549"/>
        <end position="552"/>
    </location>
</feature>
<feature type="turn" evidence="3">
    <location>
        <begin position="554"/>
        <end position="556"/>
    </location>
</feature>
<feature type="helix" evidence="3">
    <location>
        <begin position="557"/>
        <end position="559"/>
    </location>
</feature>
<feature type="strand" evidence="3">
    <location>
        <begin position="560"/>
        <end position="563"/>
    </location>
</feature>
<evidence type="ECO:0000255" key="1"/>
<evidence type="ECO:0000269" key="2">
    <source>
    </source>
</evidence>
<evidence type="ECO:0007829" key="3">
    <source>
        <dbReference type="PDB" id="1X0C"/>
    </source>
</evidence>
<evidence type="ECO:0007829" key="4">
    <source>
        <dbReference type="PDB" id="2Z8G"/>
    </source>
</evidence>
<accession>O00105</accession>
<sequence>MRSTGYLLTLSAAFQVAQAAVTANNSQLLTWWHNTGEINTQTPVADGNVRQSGLYSVKVQTTPASSSLYYDSFVYLAIPGNGMSDQLQYTQGYNQTQAWTSFLYSHDATVKISRNGSSANSNVVIRPTSLNFPVRYDNQSVYITVPYSPTGYRFSVEFDDDLISLAPSGARQPENALLIFASPFENSSTKPQPGSPNSIAPAPGRVLGLNTTSASTVVFNPGVYYFTGHDHMVLSSSVTWVYFAPGAYVKGAVEFLSTASEVKASGHGVLSGEQYVWYADPDEGYQKASGANNNGLRMWRGTLGNSSQTFVLNGVTVSAPPFNSMDWSGNSLDLITCRVDDYKQVGAFYGQTDGLEMYPGTILQDVFYHTDDDGLKMYYSNVTARNIVMWKESVAPVVEFGWTPRNTENVLFDNVDVIHQAYANAGNNPGIFGAVNNYLYAPDGLSSNHSTGNSNMTVRNITWSNFRAEGSSSALFRINPIQNLDNISIKNVSIESFEPLSINTTESWMPVWYDLNNGKQITVTDFSIEGFTVGNTTITASNAASVGRIDGVDPAYAGSVHYID</sequence>
<comment type="function">
    <text>Hydrolyzes pullulan, a linear polymer which is composed of maltotriose units with alpha-1,6 glucosidic linkages, to produce isopanose (Glca1-4Glca1-6Glc).</text>
</comment>
<comment type="catalytic activity">
    <reaction>
        <text>Hydrolysis of pullulan to isopanose (6-alpha-maltosylglucose).</text>
        <dbReference type="EC" id="3.2.1.57"/>
    </reaction>
</comment>
<comment type="subcellular location">
    <subcellularLocation>
        <location>Secreted</location>
    </subcellularLocation>
</comment>
<comment type="PTM">
    <text>N-glycosylated.</text>
</comment>